<accession>Q13VE3</accession>
<name>DADA_PARXL</name>
<protein>
    <recommendedName>
        <fullName evidence="1">D-amino acid dehydrogenase</fullName>
        <ecNumber evidence="1">1.4.99.-</ecNumber>
    </recommendedName>
</protein>
<evidence type="ECO:0000255" key="1">
    <source>
        <dbReference type="HAMAP-Rule" id="MF_01202"/>
    </source>
</evidence>
<proteinExistence type="inferred from homology"/>
<reference key="1">
    <citation type="journal article" date="2006" name="Proc. Natl. Acad. Sci. U.S.A.">
        <title>Burkholderia xenovorans LB400 harbors a multi-replicon, 9.73-Mbp genome shaped for versatility.</title>
        <authorList>
            <person name="Chain P.S.G."/>
            <person name="Denef V.J."/>
            <person name="Konstantinidis K.T."/>
            <person name="Vergez L.M."/>
            <person name="Agullo L."/>
            <person name="Reyes V.L."/>
            <person name="Hauser L."/>
            <person name="Cordova M."/>
            <person name="Gomez L."/>
            <person name="Gonzalez M."/>
            <person name="Land M."/>
            <person name="Lao V."/>
            <person name="Larimer F."/>
            <person name="LiPuma J.J."/>
            <person name="Mahenthiralingam E."/>
            <person name="Malfatti S.A."/>
            <person name="Marx C.J."/>
            <person name="Parnell J.J."/>
            <person name="Ramette A."/>
            <person name="Richardson P."/>
            <person name="Seeger M."/>
            <person name="Smith D."/>
            <person name="Spilker T."/>
            <person name="Sul W.J."/>
            <person name="Tsoi T.V."/>
            <person name="Ulrich L.E."/>
            <person name="Zhulin I.B."/>
            <person name="Tiedje J.M."/>
        </authorList>
    </citation>
    <scope>NUCLEOTIDE SEQUENCE [LARGE SCALE GENOMIC DNA]</scope>
    <source>
        <strain>LB400</strain>
    </source>
</reference>
<gene>
    <name evidence="1" type="primary">dadA</name>
    <name type="ordered locus">Bxeno_A3408</name>
    <name type="ORF">Bxe_A1001</name>
</gene>
<comment type="function">
    <text evidence="1">Oxidative deamination of D-amino acids.</text>
</comment>
<comment type="catalytic activity">
    <reaction evidence="1">
        <text>a D-alpha-amino acid + A + H2O = a 2-oxocarboxylate + AH2 + NH4(+)</text>
        <dbReference type="Rhea" id="RHEA:18125"/>
        <dbReference type="ChEBI" id="CHEBI:13193"/>
        <dbReference type="ChEBI" id="CHEBI:15377"/>
        <dbReference type="ChEBI" id="CHEBI:17499"/>
        <dbReference type="ChEBI" id="CHEBI:28938"/>
        <dbReference type="ChEBI" id="CHEBI:35179"/>
        <dbReference type="ChEBI" id="CHEBI:59871"/>
    </reaction>
</comment>
<comment type="cofactor">
    <cofactor evidence="1">
        <name>FAD</name>
        <dbReference type="ChEBI" id="CHEBI:57692"/>
    </cofactor>
</comment>
<comment type="pathway">
    <text>Amino-acid degradation; D-alanine degradation; NH(3) and pyruvate from D-alanine: step 1/1.</text>
</comment>
<comment type="similarity">
    <text evidence="1">Belongs to the DadA oxidoreductase family.</text>
</comment>
<sequence length="429" mass="46194">MRVVVLGSGVVGVTSAYYLARAGHEVTVIDREAGPALETSFANAGQISPGYASPWAAPGVPLKAVKWMFQKHAPLAIRLDGTQFQLQWMWQMLQNCTSSRYAVNKGRMVRLAEYSRDCLQALRAETGIQYEGRTGGTLQVFRTQQQFEGAAKDIAVLREASVPYELLSPAELAQAEPALAAVSHKLTGGLRLPGDETGDCQMFTTRLAALAEQLGVKFRYNTPIDALAMAGDRIAGVKCGEELVRADSFVVALGSYSTQFLSGLVKIPVYPLKGYSITAPIVNEASAPVSTVLDETYKIAITRFDDRIRVGGMAEIVGFDKSLREARRETLELCVNDLFPGGGDTSKATFWSGLRPMTPDGTPIVGRTPVANLFLNTGHGTLGWTMSCGSGQLLADVMSGKQPAIKADDLSVHRYLGETRGAHRPAYAA</sequence>
<keyword id="KW-0274">FAD</keyword>
<keyword id="KW-0285">Flavoprotein</keyword>
<keyword id="KW-0560">Oxidoreductase</keyword>
<keyword id="KW-1185">Reference proteome</keyword>
<feature type="chain" id="PRO_1000066086" description="D-amino acid dehydrogenase">
    <location>
        <begin position="1"/>
        <end position="429"/>
    </location>
</feature>
<feature type="binding site" evidence="1">
    <location>
        <begin position="3"/>
        <end position="17"/>
    </location>
    <ligand>
        <name>FAD</name>
        <dbReference type="ChEBI" id="CHEBI:57692"/>
    </ligand>
</feature>
<dbReference type="EC" id="1.4.99.-" evidence="1"/>
<dbReference type="EMBL" id="CP000270">
    <property type="protein sequence ID" value="ABE31946.1"/>
    <property type="molecule type" value="Genomic_DNA"/>
</dbReference>
<dbReference type="RefSeq" id="WP_011489462.1">
    <property type="nucleotide sequence ID" value="NC_007951.1"/>
</dbReference>
<dbReference type="SMR" id="Q13VE3"/>
<dbReference type="STRING" id="266265.Bxe_A1001"/>
<dbReference type="KEGG" id="bxb:DR64_3162"/>
<dbReference type="KEGG" id="bxe:Bxe_A1001"/>
<dbReference type="PATRIC" id="fig|266265.5.peg.3579"/>
<dbReference type="eggNOG" id="COG0665">
    <property type="taxonomic scope" value="Bacteria"/>
</dbReference>
<dbReference type="OrthoDB" id="18526at2"/>
<dbReference type="UniPathway" id="UPA00043">
    <property type="reaction ID" value="UER00498"/>
</dbReference>
<dbReference type="Proteomes" id="UP000001817">
    <property type="component" value="Chromosome 1"/>
</dbReference>
<dbReference type="GO" id="GO:0005737">
    <property type="term" value="C:cytoplasm"/>
    <property type="evidence" value="ECO:0007669"/>
    <property type="project" value="TreeGrafter"/>
</dbReference>
<dbReference type="GO" id="GO:0005886">
    <property type="term" value="C:plasma membrane"/>
    <property type="evidence" value="ECO:0007669"/>
    <property type="project" value="TreeGrafter"/>
</dbReference>
<dbReference type="GO" id="GO:0008718">
    <property type="term" value="F:D-amino-acid dehydrogenase activity"/>
    <property type="evidence" value="ECO:0007669"/>
    <property type="project" value="UniProtKB-UniRule"/>
</dbReference>
<dbReference type="GO" id="GO:0055130">
    <property type="term" value="P:D-alanine catabolic process"/>
    <property type="evidence" value="ECO:0007669"/>
    <property type="project" value="UniProtKB-UniPathway"/>
</dbReference>
<dbReference type="FunFam" id="3.50.50.60:FF:000020">
    <property type="entry name" value="D-amino acid dehydrogenase"/>
    <property type="match status" value="1"/>
</dbReference>
<dbReference type="Gene3D" id="3.30.9.10">
    <property type="entry name" value="D-Amino Acid Oxidase, subunit A, domain 2"/>
    <property type="match status" value="1"/>
</dbReference>
<dbReference type="Gene3D" id="3.50.50.60">
    <property type="entry name" value="FAD/NAD(P)-binding domain"/>
    <property type="match status" value="2"/>
</dbReference>
<dbReference type="HAMAP" id="MF_01202">
    <property type="entry name" value="DadA"/>
    <property type="match status" value="1"/>
</dbReference>
<dbReference type="InterPro" id="IPR023080">
    <property type="entry name" value="DadA"/>
</dbReference>
<dbReference type="InterPro" id="IPR006076">
    <property type="entry name" value="FAD-dep_OxRdtase"/>
</dbReference>
<dbReference type="InterPro" id="IPR036188">
    <property type="entry name" value="FAD/NAD-bd_sf"/>
</dbReference>
<dbReference type="NCBIfam" id="NF001933">
    <property type="entry name" value="PRK00711.1"/>
    <property type="match status" value="1"/>
</dbReference>
<dbReference type="PANTHER" id="PTHR13847:SF280">
    <property type="entry name" value="D-AMINO ACID DEHYDROGENASE"/>
    <property type="match status" value="1"/>
</dbReference>
<dbReference type="PANTHER" id="PTHR13847">
    <property type="entry name" value="SARCOSINE DEHYDROGENASE-RELATED"/>
    <property type="match status" value="1"/>
</dbReference>
<dbReference type="Pfam" id="PF01266">
    <property type="entry name" value="DAO"/>
    <property type="match status" value="1"/>
</dbReference>
<dbReference type="SUPFAM" id="SSF54373">
    <property type="entry name" value="FAD-linked reductases, C-terminal domain"/>
    <property type="match status" value="1"/>
</dbReference>
<dbReference type="SUPFAM" id="SSF51905">
    <property type="entry name" value="FAD/NAD(P)-binding domain"/>
    <property type="match status" value="1"/>
</dbReference>
<organism>
    <name type="scientific">Paraburkholderia xenovorans (strain LB400)</name>
    <dbReference type="NCBI Taxonomy" id="266265"/>
    <lineage>
        <taxon>Bacteria</taxon>
        <taxon>Pseudomonadati</taxon>
        <taxon>Pseudomonadota</taxon>
        <taxon>Betaproteobacteria</taxon>
        <taxon>Burkholderiales</taxon>
        <taxon>Burkholderiaceae</taxon>
        <taxon>Paraburkholderia</taxon>
    </lineage>
</organism>